<feature type="chain" id="PRO_0000087228" description="Ferric reductase B">
    <location>
        <begin position="1"/>
        <end position="27" status="greater than"/>
    </location>
</feature>
<feature type="non-terminal residue" evidence="2">
    <location>
        <position position="27"/>
    </location>
</feature>
<comment type="function">
    <text evidence="1">Reductase activity that acts on Fe(3+)-chelates and uses both NADH and NADPH as electron donors. May play a role in iron uptake.</text>
</comment>
<comment type="catalytic activity">
    <reaction evidence="1">
        <text>2 a Fe(II)-siderophore + NAD(+) + H(+) = 2 a Fe(III)-siderophore + NADH</text>
        <dbReference type="Rhea" id="RHEA:15061"/>
        <dbReference type="Rhea" id="RHEA-COMP:11342"/>
        <dbReference type="Rhea" id="RHEA-COMP:11344"/>
        <dbReference type="ChEBI" id="CHEBI:15378"/>
        <dbReference type="ChEBI" id="CHEBI:29033"/>
        <dbReference type="ChEBI" id="CHEBI:29034"/>
        <dbReference type="ChEBI" id="CHEBI:57540"/>
        <dbReference type="ChEBI" id="CHEBI:57945"/>
        <dbReference type="EC" id="1.16.1.7"/>
    </reaction>
</comment>
<comment type="cofactor">
    <cofactor evidence="1">
        <name>FAD</name>
        <dbReference type="ChEBI" id="CHEBI:57692"/>
    </cofactor>
    <text evidence="1">Binds 1 FAD per subunit.</text>
</comment>
<comment type="biophysicochemical properties">
    <kinetics>
        <KM evidence="1">0.4 mM for Fe(3+)EGTA and NADH</KM>
        <KM evidence="1">1.6 mM for Fe(3+)EDTA and NADH</KM>
        <KM evidence="1">0.4 mM for Fe(3+)citrate and NADH</KM>
        <KM evidence="1">0.4 mM for Fe(3+)chloride and NADH</KM>
    </kinetics>
</comment>
<comment type="subunit">
    <text evidence="1">Homodimer.</text>
</comment>
<comment type="induction">
    <text evidence="1">By Fe(3+) ion deprivation.</text>
</comment>
<comment type="mass spectrometry" mass="20196.0" method="MALDI" evidence="1"/>
<gene>
    <name type="primary">ferB</name>
</gene>
<proteinExistence type="evidence at protein level"/>
<accession>P84469</accession>
<dbReference type="EC" id="1.16.1.7"/>
<dbReference type="SMR" id="P84469"/>
<dbReference type="SABIO-RK" id="P84469"/>
<dbReference type="GO" id="GO:0140618">
    <property type="term" value="F:ferric-chelate reductase (NADH) activity"/>
    <property type="evidence" value="ECO:0007669"/>
    <property type="project" value="UniProtKB-EC"/>
</dbReference>
<keyword id="KW-0903">Direct protein sequencing</keyword>
<keyword id="KW-0249">Electron transport</keyword>
<keyword id="KW-0274">FAD</keyword>
<keyword id="KW-0285">Flavoprotein</keyword>
<keyword id="KW-0520">NAD</keyword>
<keyword id="KW-0521">NADP</keyword>
<keyword id="KW-0560">Oxidoreductase</keyword>
<keyword id="KW-0813">Transport</keyword>
<sequence length="27" mass="3012">MVKTVAVMVGSLRKDSLAHKLMKVLQK</sequence>
<organism>
    <name type="scientific">Paracoccus denitrificans</name>
    <dbReference type="NCBI Taxonomy" id="266"/>
    <lineage>
        <taxon>Bacteria</taxon>
        <taxon>Pseudomonadati</taxon>
        <taxon>Pseudomonadota</taxon>
        <taxon>Alphaproteobacteria</taxon>
        <taxon>Rhodobacterales</taxon>
        <taxon>Paracoccaceae</taxon>
        <taxon>Paracoccus</taxon>
    </lineage>
</organism>
<protein>
    <recommendedName>
        <fullName>Ferric reductase B</fullName>
        <ecNumber>1.16.1.7</ecNumber>
    </recommendedName>
</protein>
<evidence type="ECO:0000269" key="1">
    <source>
    </source>
</evidence>
<evidence type="ECO:0000303" key="2">
    <source>
    </source>
</evidence>
<evidence type="ECO:0000305" key="3"/>
<reference evidence="3" key="1">
    <citation type="journal article" date="2004" name="Eur. J. Biochem.">
        <title>Isolation and biochemical characterization of two soluble iron(III) reductases from Paracoccus denitrificans.</title>
        <authorList>
            <person name="Mazoch J."/>
            <person name="Tesarik R."/>
            <person name="Sedlacek V."/>
            <person name="Kucera I."/>
            <person name="Turanek J."/>
        </authorList>
    </citation>
    <scope>PROTEIN SEQUENCE</scope>
    <scope>FUNCTION</scope>
    <scope>CATALYTIC ACTIVITY</scope>
    <scope>COFACTOR</scope>
    <scope>BIOPHYSICOCHEMICAL PROPERTIES</scope>
    <scope>SUBUNIT</scope>
    <scope>INDUCTION</scope>
    <scope>MASS SPECTROMETRY</scope>
</reference>
<name>FERB_PARDE</name>